<feature type="chain" id="PRO_0000363956" description="Histone-lysine N-methyltransferase EZH1">
    <location>
        <begin position="1"/>
        <end position="747"/>
    </location>
</feature>
<feature type="domain" description="CXC" evidence="4">
    <location>
        <begin position="504"/>
        <end position="606"/>
    </location>
</feature>
<feature type="domain" description="SET" evidence="3">
    <location>
        <begin position="613"/>
        <end position="728"/>
    </location>
</feature>
<feature type="region of interest" description="Disordered" evidence="5">
    <location>
        <begin position="186"/>
        <end position="229"/>
    </location>
</feature>
<feature type="region of interest" description="Disordered" evidence="5">
    <location>
        <begin position="375"/>
        <end position="421"/>
    </location>
</feature>
<feature type="compositionally biased region" description="Basic and acidic residues" evidence="5">
    <location>
        <begin position="194"/>
        <end position="211"/>
    </location>
</feature>
<feature type="compositionally biased region" description="Basic and acidic residues" evidence="5">
    <location>
        <begin position="382"/>
        <end position="393"/>
    </location>
</feature>
<feature type="compositionally biased region" description="Polar residues" evidence="5">
    <location>
        <begin position="395"/>
        <end position="414"/>
    </location>
</feature>
<feature type="cross-link" description="Glycyl lysine isopeptide (Lys-Gly) (interchain with G-Cter in SUMO2)" evidence="2">
    <location>
        <position position="327"/>
    </location>
</feature>
<feature type="splice variant" id="VSP_036369" description="In isoform 2." evidence="6">
    <original>VVMVNGDHRIGIFAKRAIQAGEELFFDYRYSQADALKYVGIERETDVL</original>
    <variation>AKITDLKA</variation>
    <location>
        <begin position="700"/>
        <end position="747"/>
    </location>
</feature>
<keyword id="KW-0025">Alternative splicing</keyword>
<keyword id="KW-0156">Chromatin regulator</keyword>
<keyword id="KW-1017">Isopeptide bond</keyword>
<keyword id="KW-0489">Methyltransferase</keyword>
<keyword id="KW-0539">Nucleus</keyword>
<keyword id="KW-1185">Reference proteome</keyword>
<keyword id="KW-0678">Repressor</keyword>
<keyword id="KW-0949">S-adenosyl-L-methionine</keyword>
<keyword id="KW-0804">Transcription</keyword>
<keyword id="KW-0805">Transcription regulation</keyword>
<keyword id="KW-0808">Transferase</keyword>
<keyword id="KW-0832">Ubl conjugation</keyword>
<organism>
    <name type="scientific">Bos taurus</name>
    <name type="common">Bovine</name>
    <dbReference type="NCBI Taxonomy" id="9913"/>
    <lineage>
        <taxon>Eukaryota</taxon>
        <taxon>Metazoa</taxon>
        <taxon>Chordata</taxon>
        <taxon>Craniata</taxon>
        <taxon>Vertebrata</taxon>
        <taxon>Euteleostomi</taxon>
        <taxon>Mammalia</taxon>
        <taxon>Eutheria</taxon>
        <taxon>Laurasiatheria</taxon>
        <taxon>Artiodactyla</taxon>
        <taxon>Ruminantia</taxon>
        <taxon>Pecora</taxon>
        <taxon>Bovidae</taxon>
        <taxon>Bovinae</taxon>
        <taxon>Bos</taxon>
    </lineage>
</organism>
<proteinExistence type="evidence at transcript level"/>
<accession>A7E2Z2</accession>
<dbReference type="EC" id="2.1.1.356" evidence="2"/>
<dbReference type="EMBL" id="BC151626">
    <property type="protein sequence ID" value="AAI51627.1"/>
    <property type="molecule type" value="mRNA"/>
</dbReference>
<dbReference type="RefSeq" id="NP_001095621.1">
    <property type="nucleotide sequence ID" value="NM_001102151.2"/>
</dbReference>
<dbReference type="RefSeq" id="NP_001421973.1">
    <molecule id="A7E2Z2-1"/>
    <property type="nucleotide sequence ID" value="NM_001435044.1"/>
</dbReference>
<dbReference type="RefSeq" id="NP_001421974.1">
    <molecule id="A7E2Z2-1"/>
    <property type="nucleotide sequence ID" value="NM_001435045.1"/>
</dbReference>
<dbReference type="RefSeq" id="NP_001421975.1">
    <molecule id="A7E2Z2-1"/>
    <property type="nucleotide sequence ID" value="NM_001435046.1"/>
</dbReference>
<dbReference type="RefSeq" id="XP_005220793.1">
    <property type="nucleotide sequence ID" value="XM_005220736.3"/>
</dbReference>
<dbReference type="RefSeq" id="XP_015314321.1">
    <property type="nucleotide sequence ID" value="XM_015458835.1"/>
</dbReference>
<dbReference type="RefSeq" id="XP_059734098.1">
    <molecule id="A7E2Z2-1"/>
    <property type="nucleotide sequence ID" value="XM_059878115.1"/>
</dbReference>
<dbReference type="RefSeq" id="XP_059734099.1">
    <molecule id="A7E2Z2-1"/>
    <property type="nucleotide sequence ID" value="XM_059878116.1"/>
</dbReference>
<dbReference type="SMR" id="A7E2Z2"/>
<dbReference type="FunCoup" id="A7E2Z2">
    <property type="interactions" value="3271"/>
</dbReference>
<dbReference type="STRING" id="9913.ENSBTAP00000063661"/>
<dbReference type="PaxDb" id="9913-ENSBTAP00000029222"/>
<dbReference type="Ensembl" id="ENSBTAT00000029222.5">
    <molecule id="A7E2Z2-2"/>
    <property type="protein sequence ID" value="ENSBTAP00000029222.4"/>
    <property type="gene ID" value="ENSBTAG00000021918.6"/>
</dbReference>
<dbReference type="GeneID" id="533087"/>
<dbReference type="KEGG" id="bta:533087"/>
<dbReference type="CTD" id="2145"/>
<dbReference type="VEuPathDB" id="HostDB:ENSBTAG00000021918"/>
<dbReference type="eggNOG" id="KOG1079">
    <property type="taxonomic scope" value="Eukaryota"/>
</dbReference>
<dbReference type="GeneTree" id="ENSGT00940000156604"/>
<dbReference type="HOGENOM" id="CLU_011342_0_0_1"/>
<dbReference type="InParanoid" id="A7E2Z2"/>
<dbReference type="OrthoDB" id="6141102at2759"/>
<dbReference type="TreeFam" id="TF314509"/>
<dbReference type="Proteomes" id="UP000009136">
    <property type="component" value="Chromosome 19"/>
</dbReference>
<dbReference type="Bgee" id="ENSBTAG00000021918">
    <property type="expression patterns" value="Expressed in neutrophil and 104 other cell types or tissues"/>
</dbReference>
<dbReference type="GO" id="GO:0035098">
    <property type="term" value="C:ESC/E(Z) complex"/>
    <property type="evidence" value="ECO:0000250"/>
    <property type="project" value="UniProtKB"/>
</dbReference>
<dbReference type="GO" id="GO:0005634">
    <property type="term" value="C:nucleus"/>
    <property type="evidence" value="ECO:0000318"/>
    <property type="project" value="GO_Central"/>
</dbReference>
<dbReference type="GO" id="GO:0003682">
    <property type="term" value="F:chromatin binding"/>
    <property type="evidence" value="ECO:0000318"/>
    <property type="project" value="GO_Central"/>
</dbReference>
<dbReference type="GO" id="GO:0046976">
    <property type="term" value="F:histone H3K27 methyltransferase activity"/>
    <property type="evidence" value="ECO:0000318"/>
    <property type="project" value="GO_Central"/>
</dbReference>
<dbReference type="GO" id="GO:0140951">
    <property type="term" value="F:histone H3K27 trimethyltransferase activity"/>
    <property type="evidence" value="ECO:0007669"/>
    <property type="project" value="UniProtKB-EC"/>
</dbReference>
<dbReference type="GO" id="GO:0031507">
    <property type="term" value="P:heterochromatin formation"/>
    <property type="evidence" value="ECO:0000318"/>
    <property type="project" value="GO_Central"/>
</dbReference>
<dbReference type="GO" id="GO:0032259">
    <property type="term" value="P:methylation"/>
    <property type="evidence" value="ECO:0007669"/>
    <property type="project" value="UniProtKB-KW"/>
</dbReference>
<dbReference type="CDD" id="cd00167">
    <property type="entry name" value="SANT"/>
    <property type="match status" value="1"/>
</dbReference>
<dbReference type="CDD" id="cd19217">
    <property type="entry name" value="SET_EZH1"/>
    <property type="match status" value="1"/>
</dbReference>
<dbReference type="FunFam" id="2.170.270.10:FF:000001">
    <property type="entry name" value="Putative histone-lysine N-methyltransferase EZH2"/>
    <property type="match status" value="1"/>
</dbReference>
<dbReference type="Gene3D" id="2.170.270.10">
    <property type="entry name" value="SET domain"/>
    <property type="match status" value="1"/>
</dbReference>
<dbReference type="InterPro" id="IPR026489">
    <property type="entry name" value="CXC_dom"/>
</dbReference>
<dbReference type="InterPro" id="IPR045318">
    <property type="entry name" value="EZH1/2-like"/>
</dbReference>
<dbReference type="InterPro" id="IPR048358">
    <property type="entry name" value="EZH1/2_MCSS"/>
</dbReference>
<dbReference type="InterPro" id="IPR021654">
    <property type="entry name" value="EZH1/EZH2"/>
</dbReference>
<dbReference type="InterPro" id="IPR044438">
    <property type="entry name" value="EZH1_SET"/>
</dbReference>
<dbReference type="InterPro" id="IPR041343">
    <property type="entry name" value="PRC2_HTH_1"/>
</dbReference>
<dbReference type="InterPro" id="IPR041355">
    <property type="entry name" value="Pre-SET_CXC"/>
</dbReference>
<dbReference type="InterPro" id="IPR001005">
    <property type="entry name" value="SANT/Myb"/>
</dbReference>
<dbReference type="InterPro" id="IPR001214">
    <property type="entry name" value="SET_dom"/>
</dbReference>
<dbReference type="InterPro" id="IPR046341">
    <property type="entry name" value="SET_dom_sf"/>
</dbReference>
<dbReference type="InterPro" id="IPR033467">
    <property type="entry name" value="Tesmin/TSO1-like_CXC"/>
</dbReference>
<dbReference type="PANTHER" id="PTHR45747">
    <property type="entry name" value="HISTONE-LYSINE N-METHYLTRANSFERASE E(Z)"/>
    <property type="match status" value="1"/>
</dbReference>
<dbReference type="PANTHER" id="PTHR45747:SF1">
    <property type="entry name" value="HISTONE-LYSINE N-METHYLTRANSFERASE EZH1"/>
    <property type="match status" value="1"/>
</dbReference>
<dbReference type="Pfam" id="PF21358">
    <property type="entry name" value="Ezh2_MCSS"/>
    <property type="match status" value="1"/>
</dbReference>
<dbReference type="Pfam" id="PF11616">
    <property type="entry name" value="EZH2_WD-Binding"/>
    <property type="match status" value="1"/>
</dbReference>
<dbReference type="Pfam" id="PF18118">
    <property type="entry name" value="PRC2_HTH_1"/>
    <property type="match status" value="1"/>
</dbReference>
<dbReference type="Pfam" id="PF18264">
    <property type="entry name" value="preSET_CXC"/>
    <property type="match status" value="1"/>
</dbReference>
<dbReference type="Pfam" id="PF00856">
    <property type="entry name" value="SET"/>
    <property type="match status" value="1"/>
</dbReference>
<dbReference type="SMART" id="SM01114">
    <property type="entry name" value="CXC"/>
    <property type="match status" value="1"/>
</dbReference>
<dbReference type="SMART" id="SM00717">
    <property type="entry name" value="SANT"/>
    <property type="match status" value="2"/>
</dbReference>
<dbReference type="SMART" id="SM00317">
    <property type="entry name" value="SET"/>
    <property type="match status" value="1"/>
</dbReference>
<dbReference type="SUPFAM" id="SSF82199">
    <property type="entry name" value="SET domain"/>
    <property type="match status" value="1"/>
</dbReference>
<dbReference type="PROSITE" id="PS51633">
    <property type="entry name" value="CXC"/>
    <property type="match status" value="1"/>
</dbReference>
<dbReference type="PROSITE" id="PS50280">
    <property type="entry name" value="SET"/>
    <property type="match status" value="1"/>
</dbReference>
<sequence>MDIPNPPTSKCITYWKRKVKSEYMRLRQLKRLQANMGAKALYVANFAKVQEKTQILNEEWKKLRVQPVQLMKPVSGHPFLKKCTIESIFPGFASQHMLMRSLNTVALVPIMYSWSPLQQNFMVEDETVLCNIPYMGDEVKEEDETFIEELINNYDGKVHGEEEMIPGSVLISDAVFLELVDALNQYSDEDEEGHNDTSDGKQDDSKEDLPVTRKRKRHAIEGSKKSSKKQFPNDMIFSAIASMFPENGVPDDMKERYRELTEMSDPNALPPQCTPNIDGPNAKSVQREQSLHSFHTLFCRRCFKYDCFLHPFHATPNVYKRKNKEIKIEPEPCGTDCFLLLEGAKEYAMLHNPRSKCSGRRRRRHHVVNASCSNTSASAVAETKEGDSDRDTGNDWASSSSEANSRCQTPTKQKASPAPPQLCVVEAPSEPVEWTGAEESLFRVFHGTYFNNFCSIARLLGTKTCKQVFQFAVKESLILKLPTDELMNPSQKKKRKHRLWAAHCRKIQLKKDNSSTQVYNYQPCDHPDRPCDSTCPCIMTQNFCEKFCQCNPDCQNRFPGCRCKTQCNTKQCPCYLAVRECDPDLCLTCGASEHWDCKVVSCKNCSIQRGLKKHLLLAPSDVAGWGTFIKESVQKNEFISEYCGELISQDEADRRGKVYDKYMSSFLFNLNNDFVVDATRKGNKIRFANHSVNPNCYAKVVMVNGDHRIGIFAKRAIQAGEELFFDYRYSQADALKYVGIERETDVL</sequence>
<evidence type="ECO:0000250" key="1"/>
<evidence type="ECO:0000250" key="2">
    <source>
        <dbReference type="UniProtKB" id="Q92800"/>
    </source>
</evidence>
<evidence type="ECO:0000255" key="3">
    <source>
        <dbReference type="PROSITE-ProRule" id="PRU00190"/>
    </source>
</evidence>
<evidence type="ECO:0000255" key="4">
    <source>
        <dbReference type="PROSITE-ProRule" id="PRU00970"/>
    </source>
</evidence>
<evidence type="ECO:0000256" key="5">
    <source>
        <dbReference type="SAM" id="MobiDB-lite"/>
    </source>
</evidence>
<evidence type="ECO:0000303" key="6">
    <source ref="1"/>
</evidence>
<protein>
    <recommendedName>
        <fullName>Histone-lysine N-methyltransferase EZH1</fullName>
        <ecNumber evidence="2">2.1.1.356</ecNumber>
    </recommendedName>
    <alternativeName>
        <fullName>Enhancer of zeste homolog 1</fullName>
    </alternativeName>
</protein>
<reference key="1">
    <citation type="submission" date="2007-08" db="EMBL/GenBank/DDBJ databases">
        <authorList>
            <consortium name="NIH - Mammalian Gene Collection (MGC) project"/>
        </authorList>
    </citation>
    <scope>NUCLEOTIDE SEQUENCE [LARGE SCALE MRNA] (ISOFORM 2)</scope>
    <source>
        <strain>Hereford</strain>
        <tissue>Thymus</tissue>
    </source>
</reference>
<comment type="function">
    <text evidence="2">Polycomb group (PcG) protein. Catalytic subunit of the PRC2/EED-EZH1 complex, which methylates 'Lys-27' of histone H3, leading to transcriptional repression of the affected target gene. Able to mono-, di- and trimethylate 'Lys-27' of histone H3 to form H3K27me1, H3K27me2 and H3K27me3, respectively. Required for embryonic stem cell derivation and self-renewal, suggesting that it is involved in safeguarding embryonic stem cell identity. Compared to EZH2-containing complexes, it is less abundant in embryonic stem cells, has weak methyltransferase activity and plays a less critical role in forming H3K27me3, which is required for embryonic stem cell identity and proper differentiation.</text>
</comment>
<comment type="catalytic activity">
    <reaction evidence="2">
        <text>L-lysyl(27)-[histone H3] + 3 S-adenosyl-L-methionine = N(6),N(6),N(6)-trimethyl-L-lysyl(27)-[histone H3] + 3 S-adenosyl-L-homocysteine + 3 H(+)</text>
        <dbReference type="Rhea" id="RHEA:60292"/>
        <dbReference type="Rhea" id="RHEA-COMP:15535"/>
        <dbReference type="Rhea" id="RHEA-COMP:15548"/>
        <dbReference type="ChEBI" id="CHEBI:15378"/>
        <dbReference type="ChEBI" id="CHEBI:29969"/>
        <dbReference type="ChEBI" id="CHEBI:57856"/>
        <dbReference type="ChEBI" id="CHEBI:59789"/>
        <dbReference type="ChEBI" id="CHEBI:61961"/>
        <dbReference type="EC" id="2.1.1.356"/>
    </reaction>
</comment>
<comment type="subunit">
    <text evidence="2">Component of the PRC2/EED-EZH1 complex, which includes EED, EZH1, SUZ12, RBBP4 and AEBP2. The PRC2/EED-EZH1 is less abundant than the PRC2/EED-EZH2 complex, has weak methyltransferase activity and compacts chromatin in the absence of the methyltransferase cofactor S-adenosyl-L-methionine (SAM). Interacts with EZHIP; the interaction blocks EZH1 methyltransferase activity.</text>
</comment>
<comment type="subcellular location">
    <subcellularLocation>
        <location evidence="2">Nucleus</location>
    </subcellularLocation>
    <text evidence="1">Colocalizes with trimethylated 'Lys-27' of histone H3.</text>
</comment>
<comment type="alternative products">
    <event type="alternative splicing"/>
    <isoform>
        <id>A7E2Z2-1</id>
        <name>1</name>
        <sequence type="displayed"/>
    </isoform>
    <isoform>
        <id>A7E2Z2-2</id>
        <name>2</name>
        <sequence type="described" ref="VSP_036369"/>
    </isoform>
</comment>
<comment type="similarity">
    <text evidence="3">Belongs to the class V-like SAM-binding methyltransferase superfamily. Histone-lysine methyltransferase family. EZ subfamily.</text>
</comment>
<name>EZH1_BOVIN</name>
<gene>
    <name type="primary">EZH1</name>
</gene>